<feature type="chain" id="PRO_0000327535" description="Delta(5) fatty acid desaturase A">
    <location>
        <begin position="1"/>
        <end position="464"/>
    </location>
</feature>
<feature type="transmembrane region" description="Helical" evidence="2">
    <location>
        <begin position="125"/>
        <end position="145"/>
    </location>
</feature>
<feature type="transmembrane region" description="Helical" evidence="2">
    <location>
        <begin position="153"/>
        <end position="173"/>
    </location>
</feature>
<feature type="transmembrane region" description="Helical" evidence="2">
    <location>
        <begin position="318"/>
        <end position="338"/>
    </location>
</feature>
<feature type="domain" description="Cytochrome b5 heme-binding" evidence="3">
    <location>
        <begin position="13"/>
        <end position="90"/>
    </location>
</feature>
<feature type="short sequence motif" description="Histidine box-1">
    <location>
        <begin position="176"/>
        <end position="180"/>
    </location>
</feature>
<feature type="short sequence motif" description="Histidine box-2">
    <location>
        <begin position="212"/>
        <end position="217"/>
    </location>
</feature>
<feature type="short sequence motif" description="Histidine box-3">
    <location>
        <begin position="396"/>
        <end position="400"/>
    </location>
</feature>
<feature type="binding site" description="axial binding residue" evidence="3">
    <location>
        <position position="48"/>
    </location>
    <ligand>
        <name>heme</name>
        <dbReference type="ChEBI" id="CHEBI:30413"/>
    </ligand>
    <ligandPart>
        <name>Fe</name>
        <dbReference type="ChEBI" id="CHEBI:18248"/>
    </ligandPart>
</feature>
<feature type="binding site" description="axial binding residue" evidence="3">
    <location>
        <position position="71"/>
    </location>
    <ligand>
        <name>heme</name>
        <dbReference type="ChEBI" id="CHEBI:30413"/>
    </ligand>
    <ligandPart>
        <name>Fe</name>
        <dbReference type="ChEBI" id="CHEBI:18248"/>
    </ligandPart>
</feature>
<organism>
    <name type="scientific">Dictyostelium discoideum</name>
    <name type="common">Social amoeba</name>
    <dbReference type="NCBI Taxonomy" id="44689"/>
    <lineage>
        <taxon>Eukaryota</taxon>
        <taxon>Amoebozoa</taxon>
        <taxon>Evosea</taxon>
        <taxon>Eumycetozoa</taxon>
        <taxon>Dictyostelia</taxon>
        <taxon>Dictyosteliales</taxon>
        <taxon>Dictyosteliaceae</taxon>
        <taxon>Dictyostelium</taxon>
    </lineage>
</organism>
<keyword id="KW-0249">Electron transport</keyword>
<keyword id="KW-0275">Fatty acid biosynthesis</keyword>
<keyword id="KW-0276">Fatty acid metabolism</keyword>
<keyword id="KW-0349">Heme</keyword>
<keyword id="KW-0408">Iron</keyword>
<keyword id="KW-0444">Lipid biosynthesis</keyword>
<keyword id="KW-0443">Lipid metabolism</keyword>
<keyword id="KW-0472">Membrane</keyword>
<keyword id="KW-0479">Metal-binding</keyword>
<keyword id="KW-0560">Oxidoreductase</keyword>
<keyword id="KW-1185">Reference proteome</keyword>
<keyword id="KW-0812">Transmembrane</keyword>
<keyword id="KW-1133">Transmembrane helix</keyword>
<keyword id="KW-0813">Transport</keyword>
<gene>
    <name type="primary">fadA</name>
    <name type="synonym">des5-1</name>
    <name type="ORF">DDB_G0285211</name>
</gene>
<comment type="function">
    <text evidence="4">Specific for desaturation of the 5 position in C16 and C18 fatty acids.</text>
</comment>
<comment type="cofactor">
    <cofactor evidence="1">
        <name>Fe cation</name>
        <dbReference type="ChEBI" id="CHEBI:24875"/>
    </cofactor>
</comment>
<comment type="subcellular location">
    <subcellularLocation>
        <location evidence="6">Membrane</location>
        <topology evidence="6">Multi-pass membrane protein</topology>
    </subcellularLocation>
</comment>
<comment type="domain">
    <text evidence="1">The histidine box domains may contain the active site and/or be involved in metal ion binding.</text>
</comment>
<comment type="disruption phenotype">
    <text evidence="5">Mutants show a significant decrease in the amount of dienoic acids with a concomitant increase in their monoenoic acid precursors, and have an increased tolerance to heat shock.</text>
</comment>
<comment type="similarity">
    <text evidence="6">Belongs to the fatty acid desaturase type 1 family.</text>
</comment>
<evidence type="ECO:0000250" key="1"/>
<evidence type="ECO:0000255" key="2"/>
<evidence type="ECO:0000255" key="3">
    <source>
        <dbReference type="PROSITE-ProRule" id="PRU00279"/>
    </source>
</evidence>
<evidence type="ECO:0000269" key="4">
    <source>
    </source>
</evidence>
<evidence type="ECO:0000269" key="5">
    <source>
    </source>
</evidence>
<evidence type="ECO:0000305" key="6"/>
<proteinExistence type="evidence at protein level"/>
<sequence>MYYSNKMSKVITGKQYSWSELAKHNTENDCWVAVDGKVYDITRWVPLHPGGKEVLLLAAGRDVTNLFESYHPMSDKPTSILKNYEIGYISSYEHPKFVQKSDFYKTLKERVRKHFKATDQDPQMAVSIFSRLALVYLLVFVTYYLAHYTSNNFYLNCFLAIVYALCNSLFSMHMMHDSCHAAISHYPGVWKWMGASFDFVTGASFLSWCHQHVIGHHIYTNVRNADPDLGQGEVDFRIVTPFQTRSWYHKYQHIYAPLLYGIYTLKYRTQDWEAFVKDGKNGAIRVSVATNFDKAAYVIGKLSFVFFRFILPLRYHSFTDLICYFLIAEFVFGWYLTINFQVSHVAEDLKFFATPERPDEPSQINEDWAILQLKTTQDYGHGSLLCTFFSGSLNHQVVHHLFPSIAQDFYPQLVPIVKEVCKEHNITYHIKPNFTEAIMSHINYLYKMGNDPDYVKKPLASKDD</sequence>
<protein>
    <recommendedName>
        <fullName>Delta(5) fatty acid desaturase A</fullName>
        <shortName>Delta-5 fatty acid desaturase A</shortName>
        <ecNumber>1.14.19.-</ecNumber>
    </recommendedName>
</protein>
<accession>Q9Y1W0</accession>
<accession>Q54NI8</accession>
<dbReference type="EC" id="1.14.19.-"/>
<dbReference type="EMBL" id="AB029311">
    <property type="protein sequence ID" value="BAA81814.1"/>
    <property type="molecule type" value="Genomic_DNA"/>
</dbReference>
<dbReference type="EMBL" id="AAFI02000076">
    <property type="protein sequence ID" value="EAL64817.1"/>
    <property type="molecule type" value="Genomic_DNA"/>
</dbReference>
<dbReference type="RefSeq" id="XP_638329.1">
    <property type="nucleotide sequence ID" value="XM_633237.1"/>
</dbReference>
<dbReference type="SMR" id="Q9Y1W0"/>
<dbReference type="FunCoup" id="Q9Y1W0">
    <property type="interactions" value="80"/>
</dbReference>
<dbReference type="STRING" id="44689.Q9Y1W0"/>
<dbReference type="PaxDb" id="44689-DDB0191456"/>
<dbReference type="EnsemblProtists" id="EAL64817">
    <property type="protein sequence ID" value="EAL64817"/>
    <property type="gene ID" value="DDB_G0285211"/>
</dbReference>
<dbReference type="GeneID" id="8624999"/>
<dbReference type="KEGG" id="ddi:DDB_G0285211"/>
<dbReference type="dictyBase" id="DDB_G0285211">
    <property type="gene designation" value="fadA"/>
</dbReference>
<dbReference type="VEuPathDB" id="AmoebaDB:DDB_G0285211"/>
<dbReference type="eggNOG" id="KOG4232">
    <property type="taxonomic scope" value="Eukaryota"/>
</dbReference>
<dbReference type="HOGENOM" id="CLU_030320_1_0_1"/>
<dbReference type="InParanoid" id="Q9Y1W0"/>
<dbReference type="OMA" id="LSANWWN"/>
<dbReference type="PhylomeDB" id="Q9Y1W0"/>
<dbReference type="PRO" id="PR:Q9Y1W0"/>
<dbReference type="Proteomes" id="UP000002195">
    <property type="component" value="Chromosome 4"/>
</dbReference>
<dbReference type="GO" id="GO:0005886">
    <property type="term" value="C:plasma membrane"/>
    <property type="evidence" value="ECO:0000305"/>
    <property type="project" value="dictyBase"/>
</dbReference>
<dbReference type="GO" id="GO:0062076">
    <property type="term" value="F:acyl-CoA (8-3)-desaturase activity"/>
    <property type="evidence" value="ECO:0000314"/>
    <property type="project" value="dictyBase"/>
</dbReference>
<dbReference type="GO" id="GO:0046872">
    <property type="term" value="F:metal ion binding"/>
    <property type="evidence" value="ECO:0007669"/>
    <property type="project" value="UniProtKB-KW"/>
</dbReference>
<dbReference type="GO" id="GO:0016491">
    <property type="term" value="F:oxidoreductase activity"/>
    <property type="evidence" value="ECO:0000314"/>
    <property type="project" value="dictyBase"/>
</dbReference>
<dbReference type="GO" id="GO:0016717">
    <property type="term" value="F:oxidoreductase activity, acting on paired donors, with oxidation of a pair of donors resulting in the reduction of molecular oxygen to two molecules of water"/>
    <property type="evidence" value="ECO:0000318"/>
    <property type="project" value="GO_Central"/>
</dbReference>
<dbReference type="GO" id="GO:0006631">
    <property type="term" value="P:fatty acid metabolic process"/>
    <property type="evidence" value="ECO:0000315"/>
    <property type="project" value="dictyBase"/>
</dbReference>
<dbReference type="GO" id="GO:0006629">
    <property type="term" value="P:lipid metabolic process"/>
    <property type="evidence" value="ECO:0000318"/>
    <property type="project" value="GO_Central"/>
</dbReference>
<dbReference type="GO" id="GO:0009408">
    <property type="term" value="P:response to heat"/>
    <property type="evidence" value="ECO:0000315"/>
    <property type="project" value="dictyBase"/>
</dbReference>
<dbReference type="GO" id="GO:0006636">
    <property type="term" value="P:unsaturated fatty acid biosynthetic process"/>
    <property type="evidence" value="ECO:0000314"/>
    <property type="project" value="dictyBase"/>
</dbReference>
<dbReference type="CDD" id="cd03506">
    <property type="entry name" value="Delta6-FADS-like"/>
    <property type="match status" value="1"/>
</dbReference>
<dbReference type="FunFam" id="3.10.120.10:FF:000007">
    <property type="entry name" value="Sulfite oxidase, mitochondrial"/>
    <property type="match status" value="1"/>
</dbReference>
<dbReference type="Gene3D" id="3.10.120.10">
    <property type="entry name" value="Cytochrome b5-like heme/steroid binding domain"/>
    <property type="match status" value="1"/>
</dbReference>
<dbReference type="InterPro" id="IPR001199">
    <property type="entry name" value="Cyt_B5-like_heme/steroid-bd"/>
</dbReference>
<dbReference type="InterPro" id="IPR036400">
    <property type="entry name" value="Cyt_B5-like_heme/steroid_sf"/>
</dbReference>
<dbReference type="InterPro" id="IPR005804">
    <property type="entry name" value="FA_desaturase_dom"/>
</dbReference>
<dbReference type="InterPro" id="IPR012171">
    <property type="entry name" value="Fatty_acid_desaturase"/>
</dbReference>
<dbReference type="PANTHER" id="PTHR19353:SF37">
    <property type="entry name" value="DELTA(5) FATTY ACID DESATURASE A"/>
    <property type="match status" value="1"/>
</dbReference>
<dbReference type="PANTHER" id="PTHR19353">
    <property type="entry name" value="FATTY ACID DESATURASE 2"/>
    <property type="match status" value="1"/>
</dbReference>
<dbReference type="Pfam" id="PF00173">
    <property type="entry name" value="Cyt-b5"/>
    <property type="match status" value="1"/>
</dbReference>
<dbReference type="Pfam" id="PF00487">
    <property type="entry name" value="FA_desaturase"/>
    <property type="match status" value="1"/>
</dbReference>
<dbReference type="PIRSF" id="PIRSF015921">
    <property type="entry name" value="FA_sphinglp_des"/>
    <property type="match status" value="1"/>
</dbReference>
<dbReference type="PRINTS" id="PR00363">
    <property type="entry name" value="CYTOCHROMEB5"/>
</dbReference>
<dbReference type="SMART" id="SM01117">
    <property type="entry name" value="Cyt-b5"/>
    <property type="match status" value="1"/>
</dbReference>
<dbReference type="SUPFAM" id="SSF55856">
    <property type="entry name" value="Cytochrome b5-like heme/steroid binding domain"/>
    <property type="match status" value="1"/>
</dbReference>
<dbReference type="PROSITE" id="PS50255">
    <property type="entry name" value="CYTOCHROME_B5_2"/>
    <property type="match status" value="1"/>
</dbReference>
<reference key="1">
    <citation type="journal article" date="1999" name="Eur. J. Biochem.">
        <title>Identification of Delta5-fatty acid desaturase from the cellular slime mold Dictyostelium discoideum.</title>
        <authorList>
            <person name="Saito T."/>
            <person name="Ochiai H."/>
        </authorList>
    </citation>
    <scope>NUCLEOTIDE SEQUENCE [GENOMIC DNA]</scope>
    <scope>FUNCTION AS DESATURASE</scope>
    <source>
        <strain>AX2</strain>
    </source>
</reference>
<reference key="2">
    <citation type="journal article" date="2005" name="Nature">
        <title>The genome of the social amoeba Dictyostelium discoideum.</title>
        <authorList>
            <person name="Eichinger L."/>
            <person name="Pachebat J.A."/>
            <person name="Gloeckner G."/>
            <person name="Rajandream M.A."/>
            <person name="Sucgang R."/>
            <person name="Berriman M."/>
            <person name="Song J."/>
            <person name="Olsen R."/>
            <person name="Szafranski K."/>
            <person name="Xu Q."/>
            <person name="Tunggal B."/>
            <person name="Kummerfeld S."/>
            <person name="Madera M."/>
            <person name="Konfortov B.A."/>
            <person name="Rivero F."/>
            <person name="Bankier A.T."/>
            <person name="Lehmann R."/>
            <person name="Hamlin N."/>
            <person name="Davies R."/>
            <person name="Gaudet P."/>
            <person name="Fey P."/>
            <person name="Pilcher K."/>
            <person name="Chen G."/>
            <person name="Saunders D."/>
            <person name="Sodergren E.J."/>
            <person name="Davis P."/>
            <person name="Kerhornou A."/>
            <person name="Nie X."/>
            <person name="Hall N."/>
            <person name="Anjard C."/>
            <person name="Hemphill L."/>
            <person name="Bason N."/>
            <person name="Farbrother P."/>
            <person name="Desany B."/>
            <person name="Just E."/>
            <person name="Morio T."/>
            <person name="Rost R."/>
            <person name="Churcher C.M."/>
            <person name="Cooper J."/>
            <person name="Haydock S."/>
            <person name="van Driessche N."/>
            <person name="Cronin A."/>
            <person name="Goodhead I."/>
            <person name="Muzny D.M."/>
            <person name="Mourier T."/>
            <person name="Pain A."/>
            <person name="Lu M."/>
            <person name="Harper D."/>
            <person name="Lindsay R."/>
            <person name="Hauser H."/>
            <person name="James K.D."/>
            <person name="Quiles M."/>
            <person name="Madan Babu M."/>
            <person name="Saito T."/>
            <person name="Buchrieser C."/>
            <person name="Wardroper A."/>
            <person name="Felder M."/>
            <person name="Thangavelu M."/>
            <person name="Johnson D."/>
            <person name="Knights A."/>
            <person name="Loulseged H."/>
            <person name="Mungall K.L."/>
            <person name="Oliver K."/>
            <person name="Price C."/>
            <person name="Quail M.A."/>
            <person name="Urushihara H."/>
            <person name="Hernandez J."/>
            <person name="Rabbinowitsch E."/>
            <person name="Steffen D."/>
            <person name="Sanders M."/>
            <person name="Ma J."/>
            <person name="Kohara Y."/>
            <person name="Sharp S."/>
            <person name="Simmonds M.N."/>
            <person name="Spiegler S."/>
            <person name="Tivey A."/>
            <person name="Sugano S."/>
            <person name="White B."/>
            <person name="Walker D."/>
            <person name="Woodward J.R."/>
            <person name="Winckler T."/>
            <person name="Tanaka Y."/>
            <person name="Shaulsky G."/>
            <person name="Schleicher M."/>
            <person name="Weinstock G.M."/>
            <person name="Rosenthal A."/>
            <person name="Cox E.C."/>
            <person name="Chisholm R.L."/>
            <person name="Gibbs R.A."/>
            <person name="Loomis W.F."/>
            <person name="Platzer M."/>
            <person name="Kay R.R."/>
            <person name="Williams J.G."/>
            <person name="Dear P.H."/>
            <person name="Noegel A.A."/>
            <person name="Barrell B.G."/>
            <person name="Kuspa A."/>
        </authorList>
    </citation>
    <scope>NUCLEOTIDE SEQUENCE [LARGE SCALE GENOMIC DNA]</scope>
    <source>
        <strain>AX4</strain>
    </source>
</reference>
<reference key="3">
    <citation type="journal article" date="2005" name="Microbiology">
        <title>Temperature adaptation in Dictyostelium: role of Delta5 fatty acid desaturase.</title>
        <authorList>
            <person name="Saito T."/>
            <person name="Kato A."/>
            <person name="Ochiai H."/>
            <person name="Morita N."/>
        </authorList>
    </citation>
    <scope>DISRUPTION PHENOTYPE</scope>
    <source>
        <strain>AX2</strain>
    </source>
</reference>
<name>FAD5A_DICDI</name>